<feature type="chain" id="PRO_1000012174" description="Isopentenyl-diphosphate Delta-isomerase">
    <location>
        <begin position="1"/>
        <end position="176"/>
    </location>
</feature>
<feature type="domain" description="Nudix hydrolase">
    <location>
        <begin position="38"/>
        <end position="172"/>
    </location>
</feature>
<feature type="active site" evidence="1">
    <location>
        <position position="75"/>
    </location>
</feature>
<feature type="active site" evidence="1">
    <location>
        <position position="124"/>
    </location>
</feature>
<feature type="binding site" evidence="1">
    <location>
        <position position="33"/>
    </location>
    <ligand>
        <name>Mn(2+)</name>
        <dbReference type="ChEBI" id="CHEBI:29035"/>
    </ligand>
</feature>
<feature type="binding site" evidence="1">
    <location>
        <position position="40"/>
    </location>
    <ligand>
        <name>Mn(2+)</name>
        <dbReference type="ChEBI" id="CHEBI:29035"/>
    </ligand>
</feature>
<feature type="binding site" evidence="1">
    <location>
        <position position="77"/>
    </location>
    <ligand>
        <name>Mn(2+)</name>
        <dbReference type="ChEBI" id="CHEBI:29035"/>
    </ligand>
</feature>
<feature type="binding site" evidence="1">
    <location>
        <position position="95"/>
    </location>
    <ligand>
        <name>Mg(2+)</name>
        <dbReference type="ChEBI" id="CHEBI:18420"/>
    </ligand>
</feature>
<feature type="binding site" evidence="1">
    <location>
        <position position="122"/>
    </location>
    <ligand>
        <name>Mn(2+)</name>
        <dbReference type="ChEBI" id="CHEBI:29035"/>
    </ligand>
</feature>
<feature type="binding site" evidence="1">
    <location>
        <position position="124"/>
    </location>
    <ligand>
        <name>Mn(2+)</name>
        <dbReference type="ChEBI" id="CHEBI:29035"/>
    </ligand>
</feature>
<dbReference type="EC" id="5.3.3.2" evidence="1"/>
<dbReference type="EMBL" id="AM408590">
    <property type="protein sequence ID" value="CAL71771.1"/>
    <property type="molecule type" value="Genomic_DNA"/>
</dbReference>
<dbReference type="SMR" id="A1KJG2"/>
<dbReference type="KEGG" id="mbb:BCG_1784c"/>
<dbReference type="HOGENOM" id="CLU_060552_2_0_11"/>
<dbReference type="UniPathway" id="UPA00059">
    <property type="reaction ID" value="UER00104"/>
</dbReference>
<dbReference type="Proteomes" id="UP000001472">
    <property type="component" value="Chromosome"/>
</dbReference>
<dbReference type="GO" id="GO:0005737">
    <property type="term" value="C:cytoplasm"/>
    <property type="evidence" value="ECO:0007669"/>
    <property type="project" value="UniProtKB-SubCell"/>
</dbReference>
<dbReference type="GO" id="GO:0004452">
    <property type="term" value="F:isopentenyl-diphosphate delta-isomerase activity"/>
    <property type="evidence" value="ECO:0007669"/>
    <property type="project" value="UniProtKB-UniRule"/>
</dbReference>
<dbReference type="GO" id="GO:0046872">
    <property type="term" value="F:metal ion binding"/>
    <property type="evidence" value="ECO:0007669"/>
    <property type="project" value="UniProtKB-KW"/>
</dbReference>
<dbReference type="GO" id="GO:0050992">
    <property type="term" value="P:dimethylallyl diphosphate biosynthetic process"/>
    <property type="evidence" value="ECO:0007669"/>
    <property type="project" value="UniProtKB-UniRule"/>
</dbReference>
<dbReference type="GO" id="GO:0008299">
    <property type="term" value="P:isoprenoid biosynthetic process"/>
    <property type="evidence" value="ECO:0007669"/>
    <property type="project" value="UniProtKB-KW"/>
</dbReference>
<dbReference type="CDD" id="cd02885">
    <property type="entry name" value="NUDIX_IPP_Isomerase"/>
    <property type="match status" value="1"/>
</dbReference>
<dbReference type="FunFam" id="3.90.79.10:FF:000009">
    <property type="entry name" value="Isopentenyl-diphosphate Delta-isomerase"/>
    <property type="match status" value="1"/>
</dbReference>
<dbReference type="Gene3D" id="3.90.79.10">
    <property type="entry name" value="Nucleoside Triphosphate Pyrophosphohydrolase"/>
    <property type="match status" value="1"/>
</dbReference>
<dbReference type="HAMAP" id="MF_00202">
    <property type="entry name" value="Idi"/>
    <property type="match status" value="1"/>
</dbReference>
<dbReference type="InterPro" id="IPR056375">
    <property type="entry name" value="Idi_bact"/>
</dbReference>
<dbReference type="InterPro" id="IPR011876">
    <property type="entry name" value="IsopentenylPP_isomerase_typ1"/>
</dbReference>
<dbReference type="InterPro" id="IPR015797">
    <property type="entry name" value="NUDIX_hydrolase-like_dom_sf"/>
</dbReference>
<dbReference type="InterPro" id="IPR000086">
    <property type="entry name" value="NUDIX_hydrolase_dom"/>
</dbReference>
<dbReference type="NCBIfam" id="TIGR02150">
    <property type="entry name" value="IPP_isom_1"/>
    <property type="match status" value="1"/>
</dbReference>
<dbReference type="NCBIfam" id="NF002995">
    <property type="entry name" value="PRK03759.1"/>
    <property type="match status" value="1"/>
</dbReference>
<dbReference type="PANTHER" id="PTHR10885">
    <property type="entry name" value="ISOPENTENYL-DIPHOSPHATE DELTA-ISOMERASE"/>
    <property type="match status" value="1"/>
</dbReference>
<dbReference type="PANTHER" id="PTHR10885:SF0">
    <property type="entry name" value="ISOPENTENYL-DIPHOSPHATE DELTA-ISOMERASE"/>
    <property type="match status" value="1"/>
</dbReference>
<dbReference type="Pfam" id="PF00293">
    <property type="entry name" value="NUDIX"/>
    <property type="match status" value="1"/>
</dbReference>
<dbReference type="PIRSF" id="PIRSF018427">
    <property type="entry name" value="Isopntndiph_ism"/>
    <property type="match status" value="1"/>
</dbReference>
<dbReference type="SUPFAM" id="SSF55811">
    <property type="entry name" value="Nudix"/>
    <property type="match status" value="1"/>
</dbReference>
<dbReference type="PROSITE" id="PS51462">
    <property type="entry name" value="NUDIX"/>
    <property type="match status" value="1"/>
</dbReference>
<protein>
    <recommendedName>
        <fullName evidence="1">Isopentenyl-diphosphate Delta-isomerase</fullName>
        <shortName evidence="1">IPP isomerase</shortName>
        <ecNumber evidence="1">5.3.3.2</ecNumber>
    </recommendedName>
    <alternativeName>
        <fullName evidence="1">IPP:DMAPP isomerase</fullName>
    </alternativeName>
    <alternativeName>
        <fullName evidence="1">Isopentenyl pyrophosphate isomerase</fullName>
    </alternativeName>
</protein>
<keyword id="KW-0963">Cytoplasm</keyword>
<keyword id="KW-0413">Isomerase</keyword>
<keyword id="KW-0414">Isoprene biosynthesis</keyword>
<keyword id="KW-0460">Magnesium</keyword>
<keyword id="KW-0464">Manganese</keyword>
<keyword id="KW-0479">Metal-binding</keyword>
<comment type="function">
    <text evidence="1">Catalyzes the 1,3-allylic rearrangement of the homoallylic substrate isopentenyl (IPP) to its highly electrophilic allylic isomer, dimethylallyl diphosphate (DMAPP).</text>
</comment>
<comment type="catalytic activity">
    <reaction evidence="1">
        <text>isopentenyl diphosphate = dimethylallyl diphosphate</text>
        <dbReference type="Rhea" id="RHEA:23284"/>
        <dbReference type="ChEBI" id="CHEBI:57623"/>
        <dbReference type="ChEBI" id="CHEBI:128769"/>
        <dbReference type="EC" id="5.3.3.2"/>
    </reaction>
</comment>
<comment type="cofactor">
    <cofactor evidence="1">
        <name>Mg(2+)</name>
        <dbReference type="ChEBI" id="CHEBI:18420"/>
    </cofactor>
    <text evidence="1">Binds 1 Mg(2+) ion per subunit. The magnesium ion binds only when substrate is bound.</text>
</comment>
<comment type="cofactor">
    <cofactor evidence="1">
        <name>Mn(2+)</name>
        <dbReference type="ChEBI" id="CHEBI:29035"/>
    </cofactor>
    <text evidence="1">Binds 1 Mn(2+) ion per subunit.</text>
</comment>
<comment type="pathway">
    <text evidence="1">Isoprenoid biosynthesis; dimethylallyl diphosphate biosynthesis; dimethylallyl diphosphate from isopentenyl diphosphate: step 1/1.</text>
</comment>
<comment type="subcellular location">
    <subcellularLocation>
        <location evidence="1">Cytoplasm</location>
    </subcellularLocation>
</comment>
<comment type="similarity">
    <text evidence="1">Belongs to the IPP isomerase type 1 family.</text>
</comment>
<organism>
    <name type="scientific">Mycobacterium bovis (strain BCG / Pasteur 1173P2)</name>
    <dbReference type="NCBI Taxonomy" id="410289"/>
    <lineage>
        <taxon>Bacteria</taxon>
        <taxon>Bacillati</taxon>
        <taxon>Actinomycetota</taxon>
        <taxon>Actinomycetes</taxon>
        <taxon>Mycobacteriales</taxon>
        <taxon>Mycobacteriaceae</taxon>
        <taxon>Mycobacterium</taxon>
        <taxon>Mycobacterium tuberculosis complex</taxon>
    </lineage>
</organism>
<proteinExistence type="inferred from homology"/>
<gene>
    <name evidence="1" type="primary">idi</name>
    <name type="ordered locus">BCG_1784c</name>
</gene>
<accession>A1KJG2</accession>
<reference key="1">
    <citation type="journal article" date="2007" name="Proc. Natl. Acad. Sci. U.S.A.">
        <title>Genome plasticity of BCG and impact on vaccine efficacy.</title>
        <authorList>
            <person name="Brosch R."/>
            <person name="Gordon S.V."/>
            <person name="Garnier T."/>
            <person name="Eiglmeier K."/>
            <person name="Frigui W."/>
            <person name="Valenti P."/>
            <person name="Dos Santos S."/>
            <person name="Duthoy S."/>
            <person name="Lacroix C."/>
            <person name="Garcia-Pelayo C."/>
            <person name="Inwald J.K."/>
            <person name="Golby P."/>
            <person name="Garcia J.N."/>
            <person name="Hewinson R.G."/>
            <person name="Behr M.A."/>
            <person name="Quail M.A."/>
            <person name="Churcher C."/>
            <person name="Barrell B.G."/>
            <person name="Parkhill J."/>
            <person name="Cole S.T."/>
        </authorList>
    </citation>
    <scope>NUCLEOTIDE SEQUENCE [LARGE SCALE GENOMIC DNA]</scope>
    <source>
        <strain>BCG / Pasteur 1173P2</strain>
    </source>
</reference>
<evidence type="ECO:0000255" key="1">
    <source>
        <dbReference type="HAMAP-Rule" id="MF_00202"/>
    </source>
</evidence>
<name>IDI_MYCBP</name>
<sequence length="176" mass="19585">MTRSYRPAPPIERVVLLNDRGDATGVADKATVHTGDTPLHLAFSSYVFDLHDQLLITRRAATKRTWPAVWTNSCCGHPLPGESLPGAIRRRLAAELGLTPDRVDLILPGFRYRAAMADGTVENEICPVYRVQVDQQPRPNSDEVDAIRWLSWEQFVRDVTAGVIAPVSPWCRSQLG</sequence>